<gene>
    <name evidence="1" type="primary">rpmF</name>
    <name type="ordered locus">MMAR_4530</name>
</gene>
<comment type="similarity">
    <text evidence="1">Belongs to the bacterial ribosomal protein bL32 family.</text>
</comment>
<accession>B2HEB1</accession>
<keyword id="KW-1185">Reference proteome</keyword>
<keyword id="KW-0687">Ribonucleoprotein</keyword>
<keyword id="KW-0689">Ribosomal protein</keyword>
<name>RL32_MYCMM</name>
<sequence>MATPKRRMSRANTRSRRSQWKATKAELVGVTVAGQKHKVPRRLLKAARLGLIDLDRR</sequence>
<organism>
    <name type="scientific">Mycobacterium marinum (strain ATCC BAA-535 / M)</name>
    <dbReference type="NCBI Taxonomy" id="216594"/>
    <lineage>
        <taxon>Bacteria</taxon>
        <taxon>Bacillati</taxon>
        <taxon>Actinomycetota</taxon>
        <taxon>Actinomycetes</taxon>
        <taxon>Mycobacteriales</taxon>
        <taxon>Mycobacteriaceae</taxon>
        <taxon>Mycobacterium</taxon>
        <taxon>Mycobacterium ulcerans group</taxon>
    </lineage>
</organism>
<reference key="1">
    <citation type="journal article" date="2008" name="Genome Res.">
        <title>Insights from the complete genome sequence of Mycobacterium marinum on the evolution of Mycobacterium tuberculosis.</title>
        <authorList>
            <person name="Stinear T.P."/>
            <person name="Seemann T."/>
            <person name="Harrison P.F."/>
            <person name="Jenkin G.A."/>
            <person name="Davies J.K."/>
            <person name="Johnson P.D."/>
            <person name="Abdellah Z."/>
            <person name="Arrowsmith C."/>
            <person name="Chillingworth T."/>
            <person name="Churcher C."/>
            <person name="Clarke K."/>
            <person name="Cronin A."/>
            <person name="Davis P."/>
            <person name="Goodhead I."/>
            <person name="Holroyd N."/>
            <person name="Jagels K."/>
            <person name="Lord A."/>
            <person name="Moule S."/>
            <person name="Mungall K."/>
            <person name="Norbertczak H."/>
            <person name="Quail M.A."/>
            <person name="Rabbinowitsch E."/>
            <person name="Walker D."/>
            <person name="White B."/>
            <person name="Whitehead S."/>
            <person name="Small P.L."/>
            <person name="Brosch R."/>
            <person name="Ramakrishnan L."/>
            <person name="Fischbach M.A."/>
            <person name="Parkhill J."/>
            <person name="Cole S.T."/>
        </authorList>
    </citation>
    <scope>NUCLEOTIDE SEQUENCE [LARGE SCALE GENOMIC DNA]</scope>
    <source>
        <strain>ATCC BAA-535 / M</strain>
    </source>
</reference>
<dbReference type="EMBL" id="CP000854">
    <property type="protein sequence ID" value="ACC42936.1"/>
    <property type="molecule type" value="Genomic_DNA"/>
</dbReference>
<dbReference type="RefSeq" id="WP_012396080.1">
    <property type="nucleotide sequence ID" value="NC_010612.1"/>
</dbReference>
<dbReference type="SMR" id="B2HEB1"/>
<dbReference type="STRING" id="216594.MMAR_4530"/>
<dbReference type="GeneID" id="34340807"/>
<dbReference type="KEGG" id="mmi:MMAR_4530"/>
<dbReference type="eggNOG" id="ENOG5033AVR">
    <property type="taxonomic scope" value="Bacteria"/>
</dbReference>
<dbReference type="HOGENOM" id="CLU_203263_0_0_11"/>
<dbReference type="OrthoDB" id="9807363at2"/>
<dbReference type="Proteomes" id="UP000001190">
    <property type="component" value="Chromosome"/>
</dbReference>
<dbReference type="GO" id="GO:0015934">
    <property type="term" value="C:large ribosomal subunit"/>
    <property type="evidence" value="ECO:0007669"/>
    <property type="project" value="InterPro"/>
</dbReference>
<dbReference type="GO" id="GO:0003735">
    <property type="term" value="F:structural constituent of ribosome"/>
    <property type="evidence" value="ECO:0007669"/>
    <property type="project" value="InterPro"/>
</dbReference>
<dbReference type="GO" id="GO:0006412">
    <property type="term" value="P:translation"/>
    <property type="evidence" value="ECO:0007669"/>
    <property type="project" value="UniProtKB-UniRule"/>
</dbReference>
<dbReference type="HAMAP" id="MF_00340">
    <property type="entry name" value="Ribosomal_bL32"/>
    <property type="match status" value="1"/>
</dbReference>
<dbReference type="InterPro" id="IPR002677">
    <property type="entry name" value="Ribosomal_bL32"/>
</dbReference>
<dbReference type="InterPro" id="IPR011332">
    <property type="entry name" value="Ribosomal_zn-bd"/>
</dbReference>
<dbReference type="NCBIfam" id="TIGR01031">
    <property type="entry name" value="rpmF_bact"/>
    <property type="match status" value="1"/>
</dbReference>
<dbReference type="Pfam" id="PF01783">
    <property type="entry name" value="Ribosomal_L32p"/>
    <property type="match status" value="1"/>
</dbReference>
<dbReference type="SUPFAM" id="SSF57829">
    <property type="entry name" value="Zn-binding ribosomal proteins"/>
    <property type="match status" value="1"/>
</dbReference>
<feature type="chain" id="PRO_1000120147" description="Large ribosomal subunit protein bL32">
    <location>
        <begin position="1"/>
        <end position="57"/>
    </location>
</feature>
<feature type="region of interest" description="Disordered" evidence="2">
    <location>
        <begin position="1"/>
        <end position="20"/>
    </location>
</feature>
<feature type="compositionally biased region" description="Basic residues" evidence="2">
    <location>
        <begin position="1"/>
        <end position="19"/>
    </location>
</feature>
<protein>
    <recommendedName>
        <fullName evidence="1">Large ribosomal subunit protein bL32</fullName>
    </recommendedName>
    <alternativeName>
        <fullName evidence="3">50S ribosomal protein L32</fullName>
    </alternativeName>
</protein>
<proteinExistence type="inferred from homology"/>
<evidence type="ECO:0000255" key="1">
    <source>
        <dbReference type="HAMAP-Rule" id="MF_00340"/>
    </source>
</evidence>
<evidence type="ECO:0000256" key="2">
    <source>
        <dbReference type="SAM" id="MobiDB-lite"/>
    </source>
</evidence>
<evidence type="ECO:0000305" key="3"/>